<comment type="function">
    <text evidence="1">The RuvA-RuvB-RuvC complex processes Holliday junction (HJ) DNA during genetic recombination and DNA repair, while the RuvA-RuvB complex plays an important role in the rescue of blocked DNA replication forks via replication fork reversal (RFR). RuvA specifically binds to HJ cruciform DNA, conferring on it an open structure. The RuvB hexamer acts as an ATP-dependent pump, pulling dsDNA into and through the RuvAB complex. HJ branch migration allows RuvC to scan DNA until it finds its consensus sequence, where it cleaves and resolves the cruciform DNA.</text>
</comment>
<comment type="subunit">
    <text evidence="1">Homotetramer. Forms an RuvA(8)-RuvB(12)-Holliday junction (HJ) complex. HJ DNA is sandwiched between 2 RuvA tetramers; dsDNA enters through RuvA and exits via RuvB. An RuvB hexamer assembles on each DNA strand where it exits the tetramer. Each RuvB hexamer is contacted by two RuvA subunits (via domain III) on 2 adjacent RuvB subunits; this complex drives branch migration. In the full resolvosome a probable DNA-RuvA(4)-RuvB(12)-RuvC(2) complex forms which resolves the HJ.</text>
</comment>
<comment type="subcellular location">
    <subcellularLocation>
        <location evidence="1">Cytoplasm</location>
    </subcellularLocation>
</comment>
<comment type="domain">
    <text evidence="1">Has three domains with a flexible linker between the domains II and III and assumes an 'L' shape. Domain III is highly mobile and contacts RuvB.</text>
</comment>
<comment type="similarity">
    <text evidence="1">Belongs to the RuvA family.</text>
</comment>
<name>RUVA_SALTO</name>
<dbReference type="EMBL" id="CP000667">
    <property type="protein sequence ID" value="ABP54272.1"/>
    <property type="molecule type" value="Genomic_DNA"/>
</dbReference>
<dbReference type="RefSeq" id="WP_011905703.1">
    <property type="nucleotide sequence ID" value="NC_009380.1"/>
</dbReference>
<dbReference type="SMR" id="A4X5X2"/>
<dbReference type="STRING" id="369723.Strop_1809"/>
<dbReference type="KEGG" id="stp:Strop_1809"/>
<dbReference type="PATRIC" id="fig|369723.5.peg.1857"/>
<dbReference type="eggNOG" id="COG0632">
    <property type="taxonomic scope" value="Bacteria"/>
</dbReference>
<dbReference type="HOGENOM" id="CLU_087936_2_1_11"/>
<dbReference type="Proteomes" id="UP000000235">
    <property type="component" value="Chromosome"/>
</dbReference>
<dbReference type="GO" id="GO:0005737">
    <property type="term" value="C:cytoplasm"/>
    <property type="evidence" value="ECO:0007669"/>
    <property type="project" value="UniProtKB-SubCell"/>
</dbReference>
<dbReference type="GO" id="GO:0009379">
    <property type="term" value="C:Holliday junction helicase complex"/>
    <property type="evidence" value="ECO:0007669"/>
    <property type="project" value="InterPro"/>
</dbReference>
<dbReference type="GO" id="GO:0048476">
    <property type="term" value="C:Holliday junction resolvase complex"/>
    <property type="evidence" value="ECO:0007669"/>
    <property type="project" value="UniProtKB-UniRule"/>
</dbReference>
<dbReference type="GO" id="GO:0005524">
    <property type="term" value="F:ATP binding"/>
    <property type="evidence" value="ECO:0007669"/>
    <property type="project" value="InterPro"/>
</dbReference>
<dbReference type="GO" id="GO:0000400">
    <property type="term" value="F:four-way junction DNA binding"/>
    <property type="evidence" value="ECO:0007669"/>
    <property type="project" value="UniProtKB-UniRule"/>
</dbReference>
<dbReference type="GO" id="GO:0009378">
    <property type="term" value="F:four-way junction helicase activity"/>
    <property type="evidence" value="ECO:0007669"/>
    <property type="project" value="InterPro"/>
</dbReference>
<dbReference type="GO" id="GO:0006310">
    <property type="term" value="P:DNA recombination"/>
    <property type="evidence" value="ECO:0007669"/>
    <property type="project" value="UniProtKB-UniRule"/>
</dbReference>
<dbReference type="GO" id="GO:0006281">
    <property type="term" value="P:DNA repair"/>
    <property type="evidence" value="ECO:0007669"/>
    <property type="project" value="UniProtKB-UniRule"/>
</dbReference>
<dbReference type="CDD" id="cd14332">
    <property type="entry name" value="UBA_RuvA_C"/>
    <property type="match status" value="1"/>
</dbReference>
<dbReference type="Gene3D" id="1.10.150.20">
    <property type="entry name" value="5' to 3' exonuclease, C-terminal subdomain"/>
    <property type="match status" value="1"/>
</dbReference>
<dbReference type="Gene3D" id="1.10.8.10">
    <property type="entry name" value="DNA helicase RuvA subunit, C-terminal domain"/>
    <property type="match status" value="1"/>
</dbReference>
<dbReference type="Gene3D" id="2.40.50.140">
    <property type="entry name" value="Nucleic acid-binding proteins"/>
    <property type="match status" value="1"/>
</dbReference>
<dbReference type="HAMAP" id="MF_00031">
    <property type="entry name" value="DNA_HJ_migration_RuvA"/>
    <property type="match status" value="1"/>
</dbReference>
<dbReference type="InterPro" id="IPR013849">
    <property type="entry name" value="DNA_helicase_Holl-junc_RuvA_I"/>
</dbReference>
<dbReference type="InterPro" id="IPR003583">
    <property type="entry name" value="Hlx-hairpin-Hlx_DNA-bd_motif"/>
</dbReference>
<dbReference type="InterPro" id="IPR012340">
    <property type="entry name" value="NA-bd_OB-fold"/>
</dbReference>
<dbReference type="InterPro" id="IPR000085">
    <property type="entry name" value="RuvA"/>
</dbReference>
<dbReference type="InterPro" id="IPR010994">
    <property type="entry name" value="RuvA_2-like"/>
</dbReference>
<dbReference type="InterPro" id="IPR011114">
    <property type="entry name" value="RuvA_C"/>
</dbReference>
<dbReference type="InterPro" id="IPR036267">
    <property type="entry name" value="RuvA_C_sf"/>
</dbReference>
<dbReference type="NCBIfam" id="TIGR00084">
    <property type="entry name" value="ruvA"/>
    <property type="match status" value="1"/>
</dbReference>
<dbReference type="Pfam" id="PF14520">
    <property type="entry name" value="HHH_5"/>
    <property type="match status" value="1"/>
</dbReference>
<dbReference type="Pfam" id="PF07499">
    <property type="entry name" value="RuvA_C"/>
    <property type="match status" value="1"/>
</dbReference>
<dbReference type="Pfam" id="PF01330">
    <property type="entry name" value="RuvA_N"/>
    <property type="match status" value="1"/>
</dbReference>
<dbReference type="SMART" id="SM00278">
    <property type="entry name" value="HhH1"/>
    <property type="match status" value="2"/>
</dbReference>
<dbReference type="SUPFAM" id="SSF46929">
    <property type="entry name" value="DNA helicase RuvA subunit, C-terminal domain"/>
    <property type="match status" value="1"/>
</dbReference>
<dbReference type="SUPFAM" id="SSF50249">
    <property type="entry name" value="Nucleic acid-binding proteins"/>
    <property type="match status" value="1"/>
</dbReference>
<dbReference type="SUPFAM" id="SSF47781">
    <property type="entry name" value="RuvA domain 2-like"/>
    <property type="match status" value="1"/>
</dbReference>
<feature type="chain" id="PRO_1000074436" description="Holliday junction branch migration complex subunit RuvA">
    <location>
        <begin position="1"/>
        <end position="200"/>
    </location>
</feature>
<feature type="region of interest" description="Domain I" evidence="1">
    <location>
        <begin position="1"/>
        <end position="63"/>
    </location>
</feature>
<feature type="region of interest" description="Domain II" evidence="1">
    <location>
        <begin position="64"/>
        <end position="142"/>
    </location>
</feature>
<feature type="region of interest" description="Flexible linker" evidence="1">
    <location>
        <begin position="143"/>
        <end position="151"/>
    </location>
</feature>
<feature type="region of interest" description="Domain III" evidence="1">
    <location>
        <begin position="151"/>
        <end position="200"/>
    </location>
</feature>
<evidence type="ECO:0000255" key="1">
    <source>
        <dbReference type="HAMAP-Rule" id="MF_00031"/>
    </source>
</evidence>
<accession>A4X5X2</accession>
<proteinExistence type="inferred from homology"/>
<keyword id="KW-0963">Cytoplasm</keyword>
<keyword id="KW-0227">DNA damage</keyword>
<keyword id="KW-0233">DNA recombination</keyword>
<keyword id="KW-0234">DNA repair</keyword>
<keyword id="KW-0238">DNA-binding</keyword>
<keyword id="KW-1185">Reference proteome</keyword>
<organism>
    <name type="scientific">Salinispora tropica (strain ATCC BAA-916 / DSM 44818 / JCM 13857 / NBRC 105044 / CNB-440)</name>
    <dbReference type="NCBI Taxonomy" id="369723"/>
    <lineage>
        <taxon>Bacteria</taxon>
        <taxon>Bacillati</taxon>
        <taxon>Actinomycetota</taxon>
        <taxon>Actinomycetes</taxon>
        <taxon>Micromonosporales</taxon>
        <taxon>Micromonosporaceae</taxon>
        <taxon>Salinispora</taxon>
    </lineage>
</organism>
<gene>
    <name evidence="1" type="primary">ruvA</name>
    <name type="ordered locus">Strop_1809</name>
</gene>
<protein>
    <recommendedName>
        <fullName evidence="1">Holliday junction branch migration complex subunit RuvA</fullName>
    </recommendedName>
</protein>
<sequence length="200" mass="20365">MIASVRGVVTATGPDHAVLEVGGVGLAVQCAPGTIADLRVGQPARLATSLVVREDSLTLYGFADDDAKALFELLQTASGVGPRLAQAVLAVHPPEAVRAAIANADTAALTRVPGIGKKGAERLVLELRDRIGPVPVGADSAAGVTTGAWPEQVRQALVGLGWTAAQADQAVTAVAETVDGAVPPVPVLLRQAIRLLGRTR</sequence>
<reference key="1">
    <citation type="journal article" date="2007" name="Proc. Natl. Acad. Sci. U.S.A.">
        <title>Genome sequencing reveals complex secondary metabolome in the marine actinomycete Salinispora tropica.</title>
        <authorList>
            <person name="Udwary D.W."/>
            <person name="Zeigler L."/>
            <person name="Asolkar R.N."/>
            <person name="Singan V."/>
            <person name="Lapidus A."/>
            <person name="Fenical W."/>
            <person name="Jensen P.R."/>
            <person name="Moore B.S."/>
        </authorList>
    </citation>
    <scope>NUCLEOTIDE SEQUENCE [LARGE SCALE GENOMIC DNA]</scope>
    <source>
        <strain>ATCC BAA-916 / DSM 44818 / JCM 13857 / NBRC 105044 / CNB-440</strain>
    </source>
</reference>